<evidence type="ECO:0000255" key="1">
    <source>
        <dbReference type="HAMAP-Rule" id="MF_01077"/>
    </source>
</evidence>
<evidence type="ECO:0000256" key="2">
    <source>
        <dbReference type="SAM" id="MobiDB-lite"/>
    </source>
</evidence>
<comment type="function">
    <text evidence="1">Required for maturation of 30S ribosomal subunits.</text>
</comment>
<comment type="subcellular location">
    <subcellularLocation>
        <location evidence="1">Cytoplasm</location>
    </subcellularLocation>
</comment>
<comment type="similarity">
    <text evidence="1">Belongs to the RimP family.</text>
</comment>
<protein>
    <recommendedName>
        <fullName evidence="1">Ribosome maturation factor RimP</fullName>
    </recommendedName>
</protein>
<dbReference type="EMBL" id="AE017223">
    <property type="protein sequence ID" value="AAX75431.1"/>
    <property type="molecule type" value="Genomic_DNA"/>
</dbReference>
<dbReference type="RefSeq" id="WP_002967047.1">
    <property type="nucleotide sequence ID" value="NC_006932.1"/>
</dbReference>
<dbReference type="SMR" id="Q57AA3"/>
<dbReference type="EnsemblBacteria" id="AAX75431">
    <property type="protein sequence ID" value="AAX75431"/>
    <property type="gene ID" value="BruAb1_2135"/>
</dbReference>
<dbReference type="GeneID" id="93017536"/>
<dbReference type="KEGG" id="bmb:BruAb1_2135"/>
<dbReference type="HOGENOM" id="CLU_070525_0_1_5"/>
<dbReference type="Proteomes" id="UP000000540">
    <property type="component" value="Chromosome I"/>
</dbReference>
<dbReference type="GO" id="GO:0005829">
    <property type="term" value="C:cytosol"/>
    <property type="evidence" value="ECO:0007669"/>
    <property type="project" value="TreeGrafter"/>
</dbReference>
<dbReference type="GO" id="GO:0000028">
    <property type="term" value="P:ribosomal small subunit assembly"/>
    <property type="evidence" value="ECO:0007669"/>
    <property type="project" value="TreeGrafter"/>
</dbReference>
<dbReference type="GO" id="GO:0006412">
    <property type="term" value="P:translation"/>
    <property type="evidence" value="ECO:0007669"/>
    <property type="project" value="TreeGrafter"/>
</dbReference>
<dbReference type="CDD" id="cd01734">
    <property type="entry name" value="YlxS_C"/>
    <property type="match status" value="1"/>
</dbReference>
<dbReference type="Gene3D" id="3.30.300.70">
    <property type="entry name" value="RimP-like superfamily, N-terminal"/>
    <property type="match status" value="1"/>
</dbReference>
<dbReference type="HAMAP" id="MF_01077">
    <property type="entry name" value="RimP"/>
    <property type="match status" value="1"/>
</dbReference>
<dbReference type="InterPro" id="IPR003728">
    <property type="entry name" value="Ribosome_maturation_RimP"/>
</dbReference>
<dbReference type="InterPro" id="IPR028998">
    <property type="entry name" value="RimP_C"/>
</dbReference>
<dbReference type="InterPro" id="IPR036847">
    <property type="entry name" value="RimP_C_sf"/>
</dbReference>
<dbReference type="InterPro" id="IPR028989">
    <property type="entry name" value="RimP_N"/>
</dbReference>
<dbReference type="InterPro" id="IPR035956">
    <property type="entry name" value="RimP_N_sf"/>
</dbReference>
<dbReference type="NCBIfam" id="NF000932">
    <property type="entry name" value="PRK00092.2-5"/>
    <property type="match status" value="1"/>
</dbReference>
<dbReference type="PANTHER" id="PTHR33867">
    <property type="entry name" value="RIBOSOME MATURATION FACTOR RIMP"/>
    <property type="match status" value="1"/>
</dbReference>
<dbReference type="PANTHER" id="PTHR33867:SF1">
    <property type="entry name" value="RIBOSOME MATURATION FACTOR RIMP"/>
    <property type="match status" value="1"/>
</dbReference>
<dbReference type="Pfam" id="PF17384">
    <property type="entry name" value="DUF150_C"/>
    <property type="match status" value="1"/>
</dbReference>
<dbReference type="Pfam" id="PF02576">
    <property type="entry name" value="RimP_N"/>
    <property type="match status" value="1"/>
</dbReference>
<dbReference type="SUPFAM" id="SSF74942">
    <property type="entry name" value="YhbC-like, C-terminal domain"/>
    <property type="match status" value="1"/>
</dbReference>
<dbReference type="SUPFAM" id="SSF75420">
    <property type="entry name" value="YhbC-like, N-terminal domain"/>
    <property type="match status" value="1"/>
</dbReference>
<proteinExistence type="inferred from homology"/>
<keyword id="KW-0963">Cytoplasm</keyword>
<keyword id="KW-0690">Ribosome biogenesis</keyword>
<organism>
    <name type="scientific">Brucella abortus biovar 1 (strain 9-941)</name>
    <dbReference type="NCBI Taxonomy" id="262698"/>
    <lineage>
        <taxon>Bacteria</taxon>
        <taxon>Pseudomonadati</taxon>
        <taxon>Pseudomonadota</taxon>
        <taxon>Alphaproteobacteria</taxon>
        <taxon>Hyphomicrobiales</taxon>
        <taxon>Brucellaceae</taxon>
        <taxon>Brucella/Ochrobactrum group</taxon>
        <taxon>Brucella</taxon>
    </lineage>
</organism>
<accession>Q57AA3</accession>
<gene>
    <name evidence="1" type="primary">rimP</name>
    <name type="ordered locus">BruAb1_2135</name>
</gene>
<sequence length="219" mass="24067">MTEQVQANETETPVAVADERIIRETGIDAKVAGIVEPVINTLGFRLVRVRLSGLNGQTLQIMAERPDGTMTVDDCELVSRTVAPVLDVEDPISGKYHLEISSPGIDRPLVRKSDFSDWAGHIAKVETSIVHEGRKKFRGRIVVGEADSVTIESDQISYGNEPVVRIPFDLISDARLVLTDDLIRDALRKDKALREGRIPGDDLGAEPEDVASTETQEKK</sequence>
<reference key="1">
    <citation type="journal article" date="2005" name="J. Bacteriol.">
        <title>Completion of the genome sequence of Brucella abortus and comparison to the highly similar genomes of Brucella melitensis and Brucella suis.</title>
        <authorList>
            <person name="Halling S.M."/>
            <person name="Peterson-Burch B.D."/>
            <person name="Bricker B.J."/>
            <person name="Zuerner R.L."/>
            <person name="Qing Z."/>
            <person name="Li L.-L."/>
            <person name="Kapur V."/>
            <person name="Alt D.P."/>
            <person name="Olsen S.C."/>
        </authorList>
    </citation>
    <scope>NUCLEOTIDE SEQUENCE [LARGE SCALE GENOMIC DNA]</scope>
    <source>
        <strain>9-941</strain>
    </source>
</reference>
<name>RIMP_BRUAB</name>
<feature type="chain" id="PRO_0000229223" description="Ribosome maturation factor RimP">
    <location>
        <begin position="1"/>
        <end position="219"/>
    </location>
</feature>
<feature type="region of interest" description="Disordered" evidence="2">
    <location>
        <begin position="195"/>
        <end position="219"/>
    </location>
</feature>